<dbReference type="EC" id="3.5.4.16" evidence="2"/>
<dbReference type="EMBL" id="AL935263">
    <property type="protein sequence ID" value="CCC80303.1"/>
    <property type="molecule type" value="Genomic_DNA"/>
</dbReference>
<dbReference type="RefSeq" id="WP_003642515.1">
    <property type="nucleotide sequence ID" value="NC_004567.2"/>
</dbReference>
<dbReference type="RefSeq" id="YP_004890817.1">
    <property type="nucleotide sequence ID" value="NC_004567.2"/>
</dbReference>
<dbReference type="SMR" id="Q88ST4"/>
<dbReference type="STRING" id="220668.lp_3297"/>
<dbReference type="EnsemblBacteria" id="CCC80303">
    <property type="protein sequence ID" value="CCC80303"/>
    <property type="gene ID" value="lp_3297"/>
</dbReference>
<dbReference type="GeneID" id="77216393"/>
<dbReference type="KEGG" id="lpl:lp_3297"/>
<dbReference type="PATRIC" id="fig|220668.9.peg.2753"/>
<dbReference type="eggNOG" id="COG0302">
    <property type="taxonomic scope" value="Bacteria"/>
</dbReference>
<dbReference type="HOGENOM" id="CLU_049768_3_2_9"/>
<dbReference type="OrthoDB" id="9801207at2"/>
<dbReference type="PhylomeDB" id="Q88ST4"/>
<dbReference type="UniPathway" id="UPA00848">
    <property type="reaction ID" value="UER00151"/>
</dbReference>
<dbReference type="Proteomes" id="UP000000432">
    <property type="component" value="Chromosome"/>
</dbReference>
<dbReference type="GO" id="GO:0005737">
    <property type="term" value="C:cytoplasm"/>
    <property type="evidence" value="ECO:0007669"/>
    <property type="project" value="TreeGrafter"/>
</dbReference>
<dbReference type="GO" id="GO:0005525">
    <property type="term" value="F:GTP binding"/>
    <property type="evidence" value="ECO:0007669"/>
    <property type="project" value="UniProtKB-KW"/>
</dbReference>
<dbReference type="GO" id="GO:0003934">
    <property type="term" value="F:GTP cyclohydrolase I activity"/>
    <property type="evidence" value="ECO:0007669"/>
    <property type="project" value="UniProtKB-UniRule"/>
</dbReference>
<dbReference type="GO" id="GO:0008270">
    <property type="term" value="F:zinc ion binding"/>
    <property type="evidence" value="ECO:0007669"/>
    <property type="project" value="UniProtKB-UniRule"/>
</dbReference>
<dbReference type="GO" id="GO:0006730">
    <property type="term" value="P:one-carbon metabolic process"/>
    <property type="evidence" value="ECO:0007669"/>
    <property type="project" value="UniProtKB-UniRule"/>
</dbReference>
<dbReference type="GO" id="GO:0006729">
    <property type="term" value="P:tetrahydrobiopterin biosynthetic process"/>
    <property type="evidence" value="ECO:0007669"/>
    <property type="project" value="TreeGrafter"/>
</dbReference>
<dbReference type="GO" id="GO:0046654">
    <property type="term" value="P:tetrahydrofolate biosynthetic process"/>
    <property type="evidence" value="ECO:0007669"/>
    <property type="project" value="UniProtKB-UniRule"/>
</dbReference>
<dbReference type="FunFam" id="1.10.286.10:FF:000001">
    <property type="entry name" value="GTP cyclohydrolase 1"/>
    <property type="match status" value="1"/>
</dbReference>
<dbReference type="FunFam" id="3.30.1130.10:FF:000001">
    <property type="entry name" value="GTP cyclohydrolase 1"/>
    <property type="match status" value="1"/>
</dbReference>
<dbReference type="Gene3D" id="1.10.286.10">
    <property type="match status" value="1"/>
</dbReference>
<dbReference type="Gene3D" id="3.30.1130.10">
    <property type="match status" value="1"/>
</dbReference>
<dbReference type="HAMAP" id="MF_00223">
    <property type="entry name" value="FolE"/>
    <property type="match status" value="1"/>
</dbReference>
<dbReference type="InterPro" id="IPR043133">
    <property type="entry name" value="GTP-CH-I_C/QueF"/>
</dbReference>
<dbReference type="InterPro" id="IPR043134">
    <property type="entry name" value="GTP-CH-I_N"/>
</dbReference>
<dbReference type="InterPro" id="IPR001474">
    <property type="entry name" value="GTP_CycHdrlase_I"/>
</dbReference>
<dbReference type="InterPro" id="IPR018234">
    <property type="entry name" value="GTP_CycHdrlase_I_CS"/>
</dbReference>
<dbReference type="InterPro" id="IPR020602">
    <property type="entry name" value="GTP_CycHdrlase_I_dom"/>
</dbReference>
<dbReference type="NCBIfam" id="TIGR00063">
    <property type="entry name" value="folE"/>
    <property type="match status" value="1"/>
</dbReference>
<dbReference type="NCBIfam" id="NF006825">
    <property type="entry name" value="PRK09347.1-2"/>
    <property type="match status" value="1"/>
</dbReference>
<dbReference type="NCBIfam" id="NF006826">
    <property type="entry name" value="PRK09347.1-3"/>
    <property type="match status" value="1"/>
</dbReference>
<dbReference type="PANTHER" id="PTHR11109:SF7">
    <property type="entry name" value="GTP CYCLOHYDROLASE 1"/>
    <property type="match status" value="1"/>
</dbReference>
<dbReference type="PANTHER" id="PTHR11109">
    <property type="entry name" value="GTP CYCLOHYDROLASE I"/>
    <property type="match status" value="1"/>
</dbReference>
<dbReference type="Pfam" id="PF01227">
    <property type="entry name" value="GTP_cyclohydroI"/>
    <property type="match status" value="1"/>
</dbReference>
<dbReference type="SUPFAM" id="SSF55620">
    <property type="entry name" value="Tetrahydrobiopterin biosynthesis enzymes-like"/>
    <property type="match status" value="1"/>
</dbReference>
<dbReference type="PROSITE" id="PS00859">
    <property type="entry name" value="GTP_CYCLOHYDROL_1_1"/>
    <property type="match status" value="1"/>
</dbReference>
<organism>
    <name type="scientific">Lactiplantibacillus plantarum (strain ATCC BAA-793 / NCIMB 8826 / WCFS1)</name>
    <name type="common">Lactobacillus plantarum</name>
    <dbReference type="NCBI Taxonomy" id="220668"/>
    <lineage>
        <taxon>Bacteria</taxon>
        <taxon>Bacillati</taxon>
        <taxon>Bacillota</taxon>
        <taxon>Bacilli</taxon>
        <taxon>Lactobacillales</taxon>
        <taxon>Lactobacillaceae</taxon>
        <taxon>Lactiplantibacillus</taxon>
    </lineage>
</organism>
<comment type="catalytic activity">
    <reaction evidence="2">
        <text>GTP + H2O = 7,8-dihydroneopterin 3'-triphosphate + formate + H(+)</text>
        <dbReference type="Rhea" id="RHEA:17473"/>
        <dbReference type="ChEBI" id="CHEBI:15377"/>
        <dbReference type="ChEBI" id="CHEBI:15378"/>
        <dbReference type="ChEBI" id="CHEBI:15740"/>
        <dbReference type="ChEBI" id="CHEBI:37565"/>
        <dbReference type="ChEBI" id="CHEBI:58462"/>
        <dbReference type="EC" id="3.5.4.16"/>
    </reaction>
</comment>
<comment type="pathway">
    <text evidence="2">Cofactor biosynthesis; 7,8-dihydroneopterin triphosphate biosynthesis; 7,8-dihydroneopterin triphosphate from GTP: step 1/1.</text>
</comment>
<comment type="subunit">
    <text evidence="1">Toroid-shaped homodecamer, composed of two pentamers of five dimers.</text>
</comment>
<comment type="similarity">
    <text evidence="2">Belongs to the GTP cyclohydrolase I family.</text>
</comment>
<reference key="1">
    <citation type="journal article" date="2003" name="Proc. Natl. Acad. Sci. U.S.A.">
        <title>Complete genome sequence of Lactobacillus plantarum WCFS1.</title>
        <authorList>
            <person name="Kleerebezem M."/>
            <person name="Boekhorst J."/>
            <person name="van Kranenburg R."/>
            <person name="Molenaar D."/>
            <person name="Kuipers O.P."/>
            <person name="Leer R."/>
            <person name="Tarchini R."/>
            <person name="Peters S.A."/>
            <person name="Sandbrink H.M."/>
            <person name="Fiers M.W.E.J."/>
            <person name="Stiekema W."/>
            <person name="Klein Lankhorst R.M."/>
            <person name="Bron P.A."/>
            <person name="Hoffer S.M."/>
            <person name="Nierop Groot M.N."/>
            <person name="Kerkhoven R."/>
            <person name="De Vries M."/>
            <person name="Ursing B."/>
            <person name="De Vos W.M."/>
            <person name="Siezen R.J."/>
        </authorList>
    </citation>
    <scope>NUCLEOTIDE SEQUENCE [LARGE SCALE GENOMIC DNA]</scope>
    <source>
        <strain>ATCC BAA-793 / NCIMB 8826 / WCFS1</strain>
    </source>
</reference>
<reference key="2">
    <citation type="journal article" date="2012" name="J. Bacteriol.">
        <title>Complete resequencing and reannotation of the Lactobacillus plantarum WCFS1 genome.</title>
        <authorList>
            <person name="Siezen R.J."/>
            <person name="Francke C."/>
            <person name="Renckens B."/>
            <person name="Boekhorst J."/>
            <person name="Wels M."/>
            <person name="Kleerebezem M."/>
            <person name="van Hijum S.A."/>
        </authorList>
    </citation>
    <scope>NUCLEOTIDE SEQUENCE [LARGE SCALE GENOMIC DNA]</scope>
    <scope>GENOME REANNOTATION</scope>
    <source>
        <strain>ATCC BAA-793 / NCIMB 8826 / WCFS1</strain>
    </source>
</reference>
<sequence>MIDEKNQAKIEHAVREILSAVGEDPDRPGLVETPARVARMYAEVFATKTAAPFDNYKLFKVEHPTEMVLLKDIPFYSMCEHHLLPFFGTVQVAYVPQHEQVIGLSKIPRLIDYCSQQPNVQERLTVSIATELQRILDPAGIAVSITARHMCMEMRGVSKPGVHTESSYYSGQFKTDLDLKREFLQRIAK</sequence>
<accession>Q88ST4</accession>
<accession>F9UTI5</accession>
<gene>
    <name evidence="2" type="primary">folE</name>
    <name type="ordered locus">lp_3297</name>
</gene>
<proteinExistence type="inferred from homology"/>
<evidence type="ECO:0000250" key="1"/>
<evidence type="ECO:0000255" key="2">
    <source>
        <dbReference type="HAMAP-Rule" id="MF_00223"/>
    </source>
</evidence>
<name>GCH1_LACPL</name>
<keyword id="KW-0342">GTP-binding</keyword>
<keyword id="KW-0378">Hydrolase</keyword>
<keyword id="KW-0479">Metal-binding</keyword>
<keyword id="KW-0547">Nucleotide-binding</keyword>
<keyword id="KW-0554">One-carbon metabolism</keyword>
<keyword id="KW-1185">Reference proteome</keyword>
<keyword id="KW-0862">Zinc</keyword>
<feature type="chain" id="PRO_0000119415" description="GTP cyclohydrolase 1">
    <location>
        <begin position="1"/>
        <end position="189"/>
    </location>
</feature>
<feature type="binding site" evidence="2">
    <location>
        <position position="79"/>
    </location>
    <ligand>
        <name>Zn(2+)</name>
        <dbReference type="ChEBI" id="CHEBI:29105"/>
    </ligand>
</feature>
<feature type="binding site" evidence="2">
    <location>
        <position position="82"/>
    </location>
    <ligand>
        <name>Zn(2+)</name>
        <dbReference type="ChEBI" id="CHEBI:29105"/>
    </ligand>
</feature>
<feature type="binding site" evidence="2">
    <location>
        <position position="151"/>
    </location>
    <ligand>
        <name>Zn(2+)</name>
        <dbReference type="ChEBI" id="CHEBI:29105"/>
    </ligand>
</feature>
<protein>
    <recommendedName>
        <fullName evidence="2">GTP cyclohydrolase 1</fullName>
        <ecNumber evidence="2">3.5.4.16</ecNumber>
    </recommendedName>
    <alternativeName>
        <fullName evidence="2">GTP cyclohydrolase I</fullName>
        <shortName evidence="2">GTP-CH-I</shortName>
    </alternativeName>
</protein>